<proteinExistence type="inferred from homology"/>
<organism>
    <name type="scientific">Escherichia coli O157:H7</name>
    <dbReference type="NCBI Taxonomy" id="83334"/>
    <lineage>
        <taxon>Bacteria</taxon>
        <taxon>Pseudomonadati</taxon>
        <taxon>Pseudomonadota</taxon>
        <taxon>Gammaproteobacteria</taxon>
        <taxon>Enterobacterales</taxon>
        <taxon>Enterobacteriaceae</taxon>
        <taxon>Escherichia</taxon>
    </lineage>
</organism>
<keyword id="KW-0066">ATP synthesis</keyword>
<keyword id="KW-0997">Cell inner membrane</keyword>
<keyword id="KW-1003">Cell membrane</keyword>
<keyword id="KW-0138">CF(0)</keyword>
<keyword id="KW-0291">Formylation</keyword>
<keyword id="KW-0375">Hydrogen ion transport</keyword>
<keyword id="KW-0406">Ion transport</keyword>
<keyword id="KW-0446">Lipid-binding</keyword>
<keyword id="KW-0472">Membrane</keyword>
<keyword id="KW-1185">Reference proteome</keyword>
<keyword id="KW-0812">Transmembrane</keyword>
<keyword id="KW-1133">Transmembrane helix</keyword>
<keyword id="KW-0813">Transport</keyword>
<gene>
    <name evidence="2" type="primary">atpE</name>
    <name type="ordered locus">Z5235</name>
    <name type="ordered locus">ECs4679</name>
</gene>
<sequence>MENLNMDLLYMAAAVMMGLAAIGAAIGIGILGGKFLEGAARQPDLIPLLRTQFFIVMGLVDAIPMIAVGLGLYVMFAVA</sequence>
<feature type="chain" id="PRO_0000112146" description="ATP synthase subunit c">
    <location>
        <begin position="1"/>
        <end position="79"/>
    </location>
</feature>
<feature type="transmembrane region" description="Helical" evidence="2">
    <location>
        <begin position="11"/>
        <end position="31"/>
    </location>
</feature>
<feature type="transmembrane region" description="Helical" evidence="2">
    <location>
        <begin position="53"/>
        <end position="73"/>
    </location>
</feature>
<feature type="site" description="Reversibly protonated during proton transport" evidence="2">
    <location>
        <position position="61"/>
    </location>
</feature>
<feature type="modified residue" description="N-formylmethionine" evidence="1">
    <location>
        <position position="1"/>
    </location>
</feature>
<accession>P68701</accession>
<accession>P00844</accession>
<reference key="1">
    <citation type="journal article" date="2001" name="Nature">
        <title>Genome sequence of enterohaemorrhagic Escherichia coli O157:H7.</title>
        <authorList>
            <person name="Perna N.T."/>
            <person name="Plunkett G. III"/>
            <person name="Burland V."/>
            <person name="Mau B."/>
            <person name="Glasner J.D."/>
            <person name="Rose D.J."/>
            <person name="Mayhew G.F."/>
            <person name="Evans P.S."/>
            <person name="Gregor J."/>
            <person name="Kirkpatrick H.A."/>
            <person name="Posfai G."/>
            <person name="Hackett J."/>
            <person name="Klink S."/>
            <person name="Boutin A."/>
            <person name="Shao Y."/>
            <person name="Miller L."/>
            <person name="Grotbeck E.J."/>
            <person name="Davis N.W."/>
            <person name="Lim A."/>
            <person name="Dimalanta E.T."/>
            <person name="Potamousis K."/>
            <person name="Apodaca J."/>
            <person name="Anantharaman T.S."/>
            <person name="Lin J."/>
            <person name="Yen G."/>
            <person name="Schwartz D.C."/>
            <person name="Welch R.A."/>
            <person name="Blattner F.R."/>
        </authorList>
    </citation>
    <scope>NUCLEOTIDE SEQUENCE [LARGE SCALE GENOMIC DNA]</scope>
    <source>
        <strain>O157:H7 / EDL933 / ATCC 700927 / EHEC</strain>
    </source>
</reference>
<reference key="2">
    <citation type="journal article" date="2001" name="DNA Res.">
        <title>Complete genome sequence of enterohemorrhagic Escherichia coli O157:H7 and genomic comparison with a laboratory strain K-12.</title>
        <authorList>
            <person name="Hayashi T."/>
            <person name="Makino K."/>
            <person name="Ohnishi M."/>
            <person name="Kurokawa K."/>
            <person name="Ishii K."/>
            <person name="Yokoyama K."/>
            <person name="Han C.-G."/>
            <person name="Ohtsubo E."/>
            <person name="Nakayama K."/>
            <person name="Murata T."/>
            <person name="Tanaka M."/>
            <person name="Tobe T."/>
            <person name="Iida T."/>
            <person name="Takami H."/>
            <person name="Honda T."/>
            <person name="Sasakawa C."/>
            <person name="Ogasawara N."/>
            <person name="Yasunaga T."/>
            <person name="Kuhara S."/>
            <person name="Shiba T."/>
            <person name="Hattori M."/>
            <person name="Shinagawa H."/>
        </authorList>
    </citation>
    <scope>NUCLEOTIDE SEQUENCE [LARGE SCALE GENOMIC DNA]</scope>
    <source>
        <strain>O157:H7 / Sakai / RIMD 0509952 / EHEC</strain>
    </source>
</reference>
<dbReference type="EMBL" id="AE005174">
    <property type="protein sequence ID" value="AAG58940.1"/>
    <property type="molecule type" value="Genomic_DNA"/>
</dbReference>
<dbReference type="EMBL" id="BA000007">
    <property type="protein sequence ID" value="BAB38102.1"/>
    <property type="molecule type" value="Genomic_DNA"/>
</dbReference>
<dbReference type="PIR" id="G91213">
    <property type="entry name" value="G91213"/>
</dbReference>
<dbReference type="PIR" id="H86059">
    <property type="entry name" value="H86059"/>
</dbReference>
<dbReference type="RefSeq" id="NP_312706.1">
    <property type="nucleotide sequence ID" value="NC_002695.1"/>
</dbReference>
<dbReference type="RefSeq" id="WP_000429386.1">
    <property type="nucleotide sequence ID" value="NZ_VOAI01000011.1"/>
</dbReference>
<dbReference type="SMR" id="P68701"/>
<dbReference type="STRING" id="155864.Z5235"/>
<dbReference type="GeneID" id="915336"/>
<dbReference type="GeneID" id="98390858"/>
<dbReference type="KEGG" id="ece:Z5235"/>
<dbReference type="KEGG" id="ecs:ECs_4679"/>
<dbReference type="PATRIC" id="fig|386585.9.peg.4884"/>
<dbReference type="eggNOG" id="ENOG5032S3K">
    <property type="taxonomic scope" value="Bacteria"/>
</dbReference>
<dbReference type="HOGENOM" id="CLU_148047_1_0_6"/>
<dbReference type="OMA" id="RTQMFIV"/>
<dbReference type="Proteomes" id="UP000000558">
    <property type="component" value="Chromosome"/>
</dbReference>
<dbReference type="Proteomes" id="UP000002519">
    <property type="component" value="Chromosome"/>
</dbReference>
<dbReference type="GO" id="GO:0005886">
    <property type="term" value="C:plasma membrane"/>
    <property type="evidence" value="ECO:0007669"/>
    <property type="project" value="UniProtKB-SubCell"/>
</dbReference>
<dbReference type="GO" id="GO:0045259">
    <property type="term" value="C:proton-transporting ATP synthase complex"/>
    <property type="evidence" value="ECO:0007669"/>
    <property type="project" value="UniProtKB-KW"/>
</dbReference>
<dbReference type="GO" id="GO:0033177">
    <property type="term" value="C:proton-transporting two-sector ATPase complex, proton-transporting domain"/>
    <property type="evidence" value="ECO:0007669"/>
    <property type="project" value="InterPro"/>
</dbReference>
<dbReference type="GO" id="GO:0008289">
    <property type="term" value="F:lipid binding"/>
    <property type="evidence" value="ECO:0007669"/>
    <property type="project" value="UniProtKB-KW"/>
</dbReference>
<dbReference type="GO" id="GO:0046933">
    <property type="term" value="F:proton-transporting ATP synthase activity, rotational mechanism"/>
    <property type="evidence" value="ECO:0007669"/>
    <property type="project" value="UniProtKB-UniRule"/>
</dbReference>
<dbReference type="CDD" id="cd18185">
    <property type="entry name" value="ATP-synt_Fo_c_ATPE"/>
    <property type="match status" value="1"/>
</dbReference>
<dbReference type="FunFam" id="1.20.20.10:FF:000002">
    <property type="entry name" value="ATP synthase subunit c"/>
    <property type="match status" value="1"/>
</dbReference>
<dbReference type="Gene3D" id="1.20.20.10">
    <property type="entry name" value="F1F0 ATP synthase subunit C"/>
    <property type="match status" value="1"/>
</dbReference>
<dbReference type="HAMAP" id="MF_01396">
    <property type="entry name" value="ATP_synth_c_bact"/>
    <property type="match status" value="1"/>
</dbReference>
<dbReference type="InterPro" id="IPR005953">
    <property type="entry name" value="ATP_synth_csu_bac/chlpt"/>
</dbReference>
<dbReference type="InterPro" id="IPR000454">
    <property type="entry name" value="ATP_synth_F0_csu"/>
</dbReference>
<dbReference type="InterPro" id="IPR020537">
    <property type="entry name" value="ATP_synth_F0_csu_DDCD_BS"/>
</dbReference>
<dbReference type="InterPro" id="IPR038662">
    <property type="entry name" value="ATP_synth_F0_csu_sf"/>
</dbReference>
<dbReference type="InterPro" id="IPR002379">
    <property type="entry name" value="ATPase_proteolipid_c-like_dom"/>
</dbReference>
<dbReference type="InterPro" id="IPR035921">
    <property type="entry name" value="F/V-ATP_Csub_sf"/>
</dbReference>
<dbReference type="NCBIfam" id="TIGR01260">
    <property type="entry name" value="ATP_synt_c"/>
    <property type="match status" value="1"/>
</dbReference>
<dbReference type="NCBIfam" id="NF005363">
    <property type="entry name" value="PRK06876.1"/>
    <property type="match status" value="1"/>
</dbReference>
<dbReference type="Pfam" id="PF00137">
    <property type="entry name" value="ATP-synt_C"/>
    <property type="match status" value="1"/>
</dbReference>
<dbReference type="PRINTS" id="PR00124">
    <property type="entry name" value="ATPASEC"/>
</dbReference>
<dbReference type="SUPFAM" id="SSF81333">
    <property type="entry name" value="F1F0 ATP synthase subunit C"/>
    <property type="match status" value="1"/>
</dbReference>
<dbReference type="PROSITE" id="PS00605">
    <property type="entry name" value="ATPASE_C"/>
    <property type="match status" value="1"/>
</dbReference>
<name>ATPL_ECO57</name>
<protein>
    <recommendedName>
        <fullName evidence="2">ATP synthase subunit c</fullName>
    </recommendedName>
    <alternativeName>
        <fullName evidence="2">ATP synthase F(0) sector subunit c</fullName>
    </alternativeName>
    <alternativeName>
        <fullName evidence="2">F-type ATPase subunit c</fullName>
        <shortName evidence="2">F-ATPase subunit c</shortName>
    </alternativeName>
    <alternativeName>
        <fullName evidence="2">Lipid-binding protein</fullName>
    </alternativeName>
</protein>
<evidence type="ECO:0000250" key="1"/>
<evidence type="ECO:0000255" key="2">
    <source>
        <dbReference type="HAMAP-Rule" id="MF_01396"/>
    </source>
</evidence>
<comment type="function">
    <text evidence="2">F(1)F(0) ATP synthase produces ATP from ADP in the presence of a proton or sodium gradient. F-type ATPases consist of two structural domains, F(1) containing the extramembraneous catalytic core and F(0) containing the membrane proton channel, linked together by a central stalk and a peripheral stalk. During catalysis, ATP synthesis in the catalytic domain of F(1) is coupled via a rotary mechanism of the central stalk subunits to proton translocation.</text>
</comment>
<comment type="function">
    <text evidence="2">Key component of the F(0) channel; it plays a direct role in translocation across the membrane. A homomeric c-ring of between 10-14 subunits forms the central stalk rotor element with the F(1) delta and epsilon subunits.</text>
</comment>
<comment type="subunit">
    <text evidence="2">F-type ATPases have 2 components, F(1) - the catalytic core - and F(0) - the membrane proton channel. F(1) has five subunits: alpha(3), beta(3), gamma(1), delta(1), epsilon(1). F(0) has three main subunits: a(1), b(2) and c(10-14). The alpha and beta chains form an alternating ring which encloses part of the gamma chain. F(1) is attached to F(0) by a central stalk formed by the gamma and epsilon chains, while a peripheral stalk is formed by the delta and b chains.</text>
</comment>
<comment type="subcellular location">
    <subcellularLocation>
        <location evidence="2">Cell inner membrane</location>
        <topology evidence="2">Multi-pass membrane protein</topology>
    </subcellularLocation>
</comment>
<comment type="miscellaneous">
    <text evidence="1">Dicyclohexylcarbodiimide (DCDD) binding to the active aspartate residue inhibits ATPase in vitro.</text>
</comment>
<comment type="similarity">
    <text evidence="2">Belongs to the ATPase C chain family.</text>
</comment>